<feature type="chain" id="PRO_0000266974" description="Probable GTP-binding protein EngB">
    <location>
        <begin position="1"/>
        <end position="206"/>
    </location>
</feature>
<feature type="domain" description="EngB-type G" evidence="1">
    <location>
        <begin position="25"/>
        <end position="198"/>
    </location>
</feature>
<feature type="binding site" evidence="1">
    <location>
        <position position="40"/>
    </location>
    <ligand>
        <name>Mg(2+)</name>
        <dbReference type="ChEBI" id="CHEBI:18420"/>
    </ligand>
</feature>
<feature type="binding site" evidence="1">
    <location>
        <position position="62"/>
    </location>
    <ligand>
        <name>Mg(2+)</name>
        <dbReference type="ChEBI" id="CHEBI:18420"/>
    </ligand>
</feature>
<accession>Q3SMA6</accession>
<name>ENGB_THIDA</name>
<dbReference type="EMBL" id="CP000116">
    <property type="protein sequence ID" value="AAZ96141.1"/>
    <property type="molecule type" value="Genomic_DNA"/>
</dbReference>
<dbReference type="RefSeq" id="WP_011310701.1">
    <property type="nucleotide sequence ID" value="NC_007404.1"/>
</dbReference>
<dbReference type="SMR" id="Q3SMA6"/>
<dbReference type="STRING" id="292415.Tbd_0188"/>
<dbReference type="KEGG" id="tbd:Tbd_0188"/>
<dbReference type="eggNOG" id="COG0218">
    <property type="taxonomic scope" value="Bacteria"/>
</dbReference>
<dbReference type="HOGENOM" id="CLU_033732_1_0_4"/>
<dbReference type="OrthoDB" id="9804921at2"/>
<dbReference type="Proteomes" id="UP000008291">
    <property type="component" value="Chromosome"/>
</dbReference>
<dbReference type="GO" id="GO:0005829">
    <property type="term" value="C:cytosol"/>
    <property type="evidence" value="ECO:0007669"/>
    <property type="project" value="TreeGrafter"/>
</dbReference>
<dbReference type="GO" id="GO:0005525">
    <property type="term" value="F:GTP binding"/>
    <property type="evidence" value="ECO:0007669"/>
    <property type="project" value="UniProtKB-UniRule"/>
</dbReference>
<dbReference type="GO" id="GO:0046872">
    <property type="term" value="F:metal ion binding"/>
    <property type="evidence" value="ECO:0007669"/>
    <property type="project" value="UniProtKB-KW"/>
</dbReference>
<dbReference type="GO" id="GO:0000917">
    <property type="term" value="P:division septum assembly"/>
    <property type="evidence" value="ECO:0007669"/>
    <property type="project" value="UniProtKB-KW"/>
</dbReference>
<dbReference type="CDD" id="cd01876">
    <property type="entry name" value="YihA_EngB"/>
    <property type="match status" value="1"/>
</dbReference>
<dbReference type="FunFam" id="3.40.50.300:FF:000098">
    <property type="entry name" value="Probable GTP-binding protein EngB"/>
    <property type="match status" value="1"/>
</dbReference>
<dbReference type="Gene3D" id="3.40.50.300">
    <property type="entry name" value="P-loop containing nucleotide triphosphate hydrolases"/>
    <property type="match status" value="1"/>
</dbReference>
<dbReference type="HAMAP" id="MF_00321">
    <property type="entry name" value="GTPase_EngB"/>
    <property type="match status" value="1"/>
</dbReference>
<dbReference type="InterPro" id="IPR030393">
    <property type="entry name" value="G_ENGB_dom"/>
</dbReference>
<dbReference type="InterPro" id="IPR006073">
    <property type="entry name" value="GTP-bd"/>
</dbReference>
<dbReference type="InterPro" id="IPR019987">
    <property type="entry name" value="GTP-bd_ribosome_bio_YsxC"/>
</dbReference>
<dbReference type="InterPro" id="IPR027417">
    <property type="entry name" value="P-loop_NTPase"/>
</dbReference>
<dbReference type="NCBIfam" id="TIGR03598">
    <property type="entry name" value="GTPase_YsxC"/>
    <property type="match status" value="1"/>
</dbReference>
<dbReference type="PANTHER" id="PTHR11649:SF13">
    <property type="entry name" value="ENGB-TYPE G DOMAIN-CONTAINING PROTEIN"/>
    <property type="match status" value="1"/>
</dbReference>
<dbReference type="PANTHER" id="PTHR11649">
    <property type="entry name" value="MSS1/TRME-RELATED GTP-BINDING PROTEIN"/>
    <property type="match status" value="1"/>
</dbReference>
<dbReference type="Pfam" id="PF01926">
    <property type="entry name" value="MMR_HSR1"/>
    <property type="match status" value="1"/>
</dbReference>
<dbReference type="SUPFAM" id="SSF52540">
    <property type="entry name" value="P-loop containing nucleoside triphosphate hydrolases"/>
    <property type="match status" value="1"/>
</dbReference>
<dbReference type="PROSITE" id="PS51706">
    <property type="entry name" value="G_ENGB"/>
    <property type="match status" value="1"/>
</dbReference>
<proteinExistence type="inferred from homology"/>
<sequence length="206" mass="22769">MTAKPVLNRAHFFTSVAQFRDLPPSRAEVAFAGRSNAGKSSAINLLTRKNRLAFTSKTPGRTQLINFFELTADTYLVDLPGYGYAKVPPEVKAKWEGLLSRYLQEREALAGMVLIMDARHPLTPLDRQMLEWFAPTGKPVHILLSKADKLSNSEKALTLRKVKQELADRETVSVQLFSSLSRVGAEEAAVRIEGWLAPEAAVHAPG</sequence>
<keyword id="KW-0131">Cell cycle</keyword>
<keyword id="KW-0132">Cell division</keyword>
<keyword id="KW-0342">GTP-binding</keyword>
<keyword id="KW-0460">Magnesium</keyword>
<keyword id="KW-0479">Metal-binding</keyword>
<keyword id="KW-0547">Nucleotide-binding</keyword>
<keyword id="KW-1185">Reference proteome</keyword>
<keyword id="KW-0717">Septation</keyword>
<comment type="function">
    <text evidence="1">Necessary for normal cell division and for the maintenance of normal septation.</text>
</comment>
<comment type="cofactor">
    <cofactor evidence="1">
        <name>Mg(2+)</name>
        <dbReference type="ChEBI" id="CHEBI:18420"/>
    </cofactor>
</comment>
<comment type="similarity">
    <text evidence="1">Belongs to the TRAFAC class TrmE-Era-EngA-EngB-Septin-like GTPase superfamily. EngB GTPase family.</text>
</comment>
<protein>
    <recommendedName>
        <fullName evidence="1">Probable GTP-binding protein EngB</fullName>
    </recommendedName>
</protein>
<organism>
    <name type="scientific">Thiobacillus denitrificans (strain ATCC 25259 / T1)</name>
    <dbReference type="NCBI Taxonomy" id="292415"/>
    <lineage>
        <taxon>Bacteria</taxon>
        <taxon>Pseudomonadati</taxon>
        <taxon>Pseudomonadota</taxon>
        <taxon>Betaproteobacteria</taxon>
        <taxon>Nitrosomonadales</taxon>
        <taxon>Thiobacillaceae</taxon>
        <taxon>Thiobacillus</taxon>
    </lineage>
</organism>
<reference key="1">
    <citation type="journal article" date="2006" name="J. Bacteriol.">
        <title>The genome sequence of the obligately chemolithoautotrophic, facultatively anaerobic bacterium Thiobacillus denitrificans.</title>
        <authorList>
            <person name="Beller H.R."/>
            <person name="Chain P.S."/>
            <person name="Letain T.E."/>
            <person name="Chakicherla A."/>
            <person name="Larimer F.W."/>
            <person name="Richardson P.M."/>
            <person name="Coleman M.A."/>
            <person name="Wood A.P."/>
            <person name="Kelly D.P."/>
        </authorList>
    </citation>
    <scope>NUCLEOTIDE SEQUENCE [LARGE SCALE GENOMIC DNA]</scope>
    <source>
        <strain>ATCC 25259 / T1</strain>
    </source>
</reference>
<evidence type="ECO:0000255" key="1">
    <source>
        <dbReference type="HAMAP-Rule" id="MF_00321"/>
    </source>
</evidence>
<gene>
    <name evidence="1" type="primary">engB</name>
    <name type="ordered locus">Tbd_0188</name>
</gene>